<comment type="function">
    <text evidence="1">Joins adenosylcobinamide-GDP and alpha-ribazole to generate adenosylcobalamin (Ado-cobalamin). Also synthesizes adenosylcobalamin 5'-phosphate from adenosylcobinamide-GDP and alpha-ribazole 5'-phosphate.</text>
</comment>
<comment type="catalytic activity">
    <reaction evidence="1">
        <text>alpha-ribazole + adenosylcob(III)inamide-GDP = adenosylcob(III)alamin + GMP + H(+)</text>
        <dbReference type="Rhea" id="RHEA:16049"/>
        <dbReference type="ChEBI" id="CHEBI:10329"/>
        <dbReference type="ChEBI" id="CHEBI:15378"/>
        <dbReference type="ChEBI" id="CHEBI:18408"/>
        <dbReference type="ChEBI" id="CHEBI:58115"/>
        <dbReference type="ChEBI" id="CHEBI:60487"/>
        <dbReference type="EC" id="2.7.8.26"/>
    </reaction>
</comment>
<comment type="catalytic activity">
    <reaction evidence="1">
        <text>alpha-ribazole 5'-phosphate + adenosylcob(III)inamide-GDP = adenosylcob(III)alamin 5'-phosphate + GMP + H(+)</text>
        <dbReference type="Rhea" id="RHEA:23560"/>
        <dbReference type="ChEBI" id="CHEBI:15378"/>
        <dbReference type="ChEBI" id="CHEBI:57918"/>
        <dbReference type="ChEBI" id="CHEBI:58115"/>
        <dbReference type="ChEBI" id="CHEBI:60487"/>
        <dbReference type="ChEBI" id="CHEBI:60493"/>
        <dbReference type="EC" id="2.7.8.26"/>
    </reaction>
</comment>
<comment type="cofactor">
    <cofactor evidence="1">
        <name>Mg(2+)</name>
        <dbReference type="ChEBI" id="CHEBI:18420"/>
    </cofactor>
</comment>
<comment type="pathway">
    <text evidence="1">Cofactor biosynthesis; adenosylcobalamin biosynthesis; adenosylcobalamin from cob(II)yrinate a,c-diamide: step 7/7.</text>
</comment>
<comment type="subcellular location">
    <subcellularLocation>
        <location evidence="1">Cell inner membrane</location>
        <topology evidence="1">Multi-pass membrane protein</topology>
    </subcellularLocation>
</comment>
<comment type="similarity">
    <text evidence="1">Belongs to the CobS family.</text>
</comment>
<keyword id="KW-0997">Cell inner membrane</keyword>
<keyword id="KW-1003">Cell membrane</keyword>
<keyword id="KW-0169">Cobalamin biosynthesis</keyword>
<keyword id="KW-0460">Magnesium</keyword>
<keyword id="KW-0472">Membrane</keyword>
<keyword id="KW-1185">Reference proteome</keyword>
<keyword id="KW-0808">Transferase</keyword>
<keyword id="KW-0812">Transmembrane</keyword>
<keyword id="KW-1133">Transmembrane helix</keyword>
<sequence length="260" mass="29998">MINRFLIALSFLTVLPLKFKEINEKELIRSIIFFPFIGFLEGVFCIFLVNIFKQIFSSSVISIILLVFLFSVRGIFHIDGLSDTFDALFYKGTGQKEKDLQQRLQIMKDSVIGVAGAVALVLDVLCRFAFVKELIDINQFLIFLFMFCFSRWIVIPLMYYGKPARTTGLGVLFIGKISSWQVIISTVLPIFLLVYFTIEKNFIFLPLIALFLFFISYILKKFFERKFNGITGDHLGATVEITEIVFLICFLLGEKLWLSY</sequence>
<dbReference type="EC" id="2.7.8.26" evidence="1"/>
<dbReference type="EMBL" id="CP001147">
    <property type="protein sequence ID" value="ACI20721.1"/>
    <property type="molecule type" value="Genomic_DNA"/>
</dbReference>
<dbReference type="RefSeq" id="WP_012545455.1">
    <property type="nucleotide sequence ID" value="NC_011296.1"/>
</dbReference>
<dbReference type="RefSeq" id="YP_002248999.1">
    <property type="nucleotide sequence ID" value="NC_011296.1"/>
</dbReference>
<dbReference type="FunCoup" id="B5YL84">
    <property type="interactions" value="182"/>
</dbReference>
<dbReference type="STRING" id="289376.THEYE_A1178"/>
<dbReference type="EnsemblBacteria" id="ACI20721">
    <property type="protein sequence ID" value="ACI20721"/>
    <property type="gene ID" value="THEYE_A1178"/>
</dbReference>
<dbReference type="KEGG" id="tye:THEYE_A1178"/>
<dbReference type="PATRIC" id="fig|289376.4.peg.1154"/>
<dbReference type="eggNOG" id="COG0368">
    <property type="taxonomic scope" value="Bacteria"/>
</dbReference>
<dbReference type="HOGENOM" id="CLU_057426_2_0_0"/>
<dbReference type="InParanoid" id="B5YL84"/>
<dbReference type="OrthoDB" id="9794626at2"/>
<dbReference type="UniPathway" id="UPA00148">
    <property type="reaction ID" value="UER00238"/>
</dbReference>
<dbReference type="Proteomes" id="UP000000718">
    <property type="component" value="Chromosome"/>
</dbReference>
<dbReference type="GO" id="GO:0005886">
    <property type="term" value="C:plasma membrane"/>
    <property type="evidence" value="ECO:0007669"/>
    <property type="project" value="UniProtKB-SubCell"/>
</dbReference>
<dbReference type="GO" id="GO:0051073">
    <property type="term" value="F:adenosylcobinamide-GDP ribazoletransferase activity"/>
    <property type="evidence" value="ECO:0007669"/>
    <property type="project" value="UniProtKB-UniRule"/>
</dbReference>
<dbReference type="GO" id="GO:0008818">
    <property type="term" value="F:cobalamin 5'-phosphate synthase activity"/>
    <property type="evidence" value="ECO:0007669"/>
    <property type="project" value="UniProtKB-UniRule"/>
</dbReference>
<dbReference type="GO" id="GO:0009236">
    <property type="term" value="P:cobalamin biosynthetic process"/>
    <property type="evidence" value="ECO:0000318"/>
    <property type="project" value="GO_Central"/>
</dbReference>
<dbReference type="HAMAP" id="MF_00719">
    <property type="entry name" value="CobS"/>
    <property type="match status" value="1"/>
</dbReference>
<dbReference type="InterPro" id="IPR003805">
    <property type="entry name" value="CobS"/>
</dbReference>
<dbReference type="NCBIfam" id="TIGR00317">
    <property type="entry name" value="cobS"/>
    <property type="match status" value="1"/>
</dbReference>
<dbReference type="PANTHER" id="PTHR34148">
    <property type="entry name" value="ADENOSYLCOBINAMIDE-GDP RIBAZOLETRANSFERASE"/>
    <property type="match status" value="1"/>
</dbReference>
<dbReference type="PANTHER" id="PTHR34148:SF1">
    <property type="entry name" value="ADENOSYLCOBINAMIDE-GDP RIBAZOLETRANSFERASE"/>
    <property type="match status" value="1"/>
</dbReference>
<dbReference type="Pfam" id="PF02654">
    <property type="entry name" value="CobS"/>
    <property type="match status" value="1"/>
</dbReference>
<gene>
    <name evidence="1" type="primary">cobS</name>
    <name type="ordered locus">THEYE_A1178</name>
</gene>
<name>COBS_THEYD</name>
<protein>
    <recommendedName>
        <fullName evidence="1">Adenosylcobinamide-GDP ribazoletransferase</fullName>
        <ecNumber evidence="1">2.7.8.26</ecNumber>
    </recommendedName>
    <alternativeName>
        <fullName evidence="1">Cobalamin synthase</fullName>
    </alternativeName>
    <alternativeName>
        <fullName evidence="1">Cobalamin-5'-phosphate synthase</fullName>
    </alternativeName>
</protein>
<organism>
    <name type="scientific">Thermodesulfovibrio yellowstonii (strain ATCC 51303 / DSM 11347 / YP87)</name>
    <dbReference type="NCBI Taxonomy" id="289376"/>
    <lineage>
        <taxon>Bacteria</taxon>
        <taxon>Pseudomonadati</taxon>
        <taxon>Nitrospirota</taxon>
        <taxon>Thermodesulfovibrionia</taxon>
        <taxon>Thermodesulfovibrionales</taxon>
        <taxon>Thermodesulfovibrionaceae</taxon>
        <taxon>Thermodesulfovibrio</taxon>
    </lineage>
</organism>
<feature type="chain" id="PRO_1000132612" description="Adenosylcobinamide-GDP ribazoletransferase">
    <location>
        <begin position="1"/>
        <end position="260"/>
    </location>
</feature>
<feature type="transmembrane region" description="Helical" evidence="1">
    <location>
        <begin position="31"/>
        <end position="51"/>
    </location>
</feature>
<feature type="transmembrane region" description="Helical" evidence="1">
    <location>
        <begin position="55"/>
        <end position="75"/>
    </location>
</feature>
<feature type="transmembrane region" description="Helical" evidence="1">
    <location>
        <begin position="111"/>
        <end position="131"/>
    </location>
</feature>
<feature type="transmembrane region" description="Helical" evidence="1">
    <location>
        <begin position="140"/>
        <end position="160"/>
    </location>
</feature>
<feature type="transmembrane region" description="Helical" evidence="1">
    <location>
        <begin position="177"/>
        <end position="197"/>
    </location>
</feature>
<feature type="transmembrane region" description="Helical" evidence="1">
    <location>
        <begin position="202"/>
        <end position="222"/>
    </location>
</feature>
<feature type="transmembrane region" description="Helical" evidence="1">
    <location>
        <begin position="234"/>
        <end position="254"/>
    </location>
</feature>
<accession>B5YL84</accession>
<reference key="1">
    <citation type="submission" date="2008-08" db="EMBL/GenBank/DDBJ databases">
        <title>The complete genome sequence of Thermodesulfovibrio yellowstonii strain ATCC 51303 / DSM 11347 / YP87.</title>
        <authorList>
            <person name="Dodson R.J."/>
            <person name="Durkin A.S."/>
            <person name="Wu M."/>
            <person name="Eisen J."/>
            <person name="Sutton G."/>
        </authorList>
    </citation>
    <scope>NUCLEOTIDE SEQUENCE [LARGE SCALE GENOMIC DNA]</scope>
    <source>
        <strain>ATCC 51303 / DSM 11347 / YP87</strain>
    </source>
</reference>
<evidence type="ECO:0000255" key="1">
    <source>
        <dbReference type="HAMAP-Rule" id="MF_00719"/>
    </source>
</evidence>
<proteinExistence type="inferred from homology"/>